<organism>
    <name type="scientific">Streptomyces griseus</name>
    <dbReference type="NCBI Taxonomy" id="1911"/>
    <lineage>
        <taxon>Bacteria</taxon>
        <taxon>Bacillati</taxon>
        <taxon>Actinomycetota</taxon>
        <taxon>Actinomycetes</taxon>
        <taxon>Kitasatosporales</taxon>
        <taxon>Streptomycetaceae</taxon>
        <taxon>Streptomyces</taxon>
    </lineage>
</organism>
<protein>
    <recommendedName>
        <fullName>Uncharacterized 31.2 kDa protein in rplA-rplJ intergenic region</fullName>
    </recommendedName>
    <alternativeName>
        <fullName>ORF31</fullName>
    </alternativeName>
</protein>
<accession>P36261</accession>
<dbReference type="EMBL" id="X72787">
    <property type="protein sequence ID" value="CAA51299.1"/>
    <property type="molecule type" value="Genomic_DNA"/>
</dbReference>
<dbReference type="PIR" id="S32237">
    <property type="entry name" value="S32237"/>
</dbReference>
<dbReference type="RefSeq" id="WP_003966998.1">
    <property type="nucleotide sequence ID" value="NZ_UAVD01000027.1"/>
</dbReference>
<dbReference type="STRING" id="1911.GCA_001715295_02334"/>
<dbReference type="OMA" id="VDIWVDD"/>
<dbReference type="OrthoDB" id="3369896at2"/>
<dbReference type="Gene3D" id="2.50.20.20">
    <property type="match status" value="1"/>
</dbReference>
<dbReference type="InterPro" id="IPR029046">
    <property type="entry name" value="LolA/LolB/LppX"/>
</dbReference>
<dbReference type="SUPFAM" id="SSF89392">
    <property type="entry name" value="Prokaryotic lipoproteins and lipoprotein localization factors"/>
    <property type="match status" value="1"/>
</dbReference>
<dbReference type="PROSITE" id="PS51257">
    <property type="entry name" value="PROKAR_LIPOPROTEIN"/>
    <property type="match status" value="1"/>
</dbReference>
<proteinExistence type="predicted"/>
<name>YO31_STRGR</name>
<feature type="chain" id="PRO_0000066360" description="Uncharacterized 31.2 kDa protein in rplA-rplJ intergenic region">
    <location>
        <begin position="1"/>
        <end position="305"/>
    </location>
</feature>
<sequence length="305" mass="31280">MRTSTARRTGTALAVAAALTSIAACSGSDGAKGSDGAGEGKAGAVSKASPVAALKQVQQKTGGAQSAKVEGTTEMGSVMSMKQSGAIGWADGLSGALTITYTGGTMGDALKQAGGDGSVQARYFKDEYYANMGDAMAANTGGKHWIRYSYKDLAELGGASGDVMKDQIQNSTPEQGVKALLASGDVKKVGQEDVRGVPATHYSGTVDVAGLTAKNSNLDAEQLAAFKEQLALAGVTTQTVDIWVDKNDLLVKKTERGEMKTGSFNSTIFYSDYGTEVPTEKPAASDTVDFKEMLKQGGATPGATS</sequence>
<reference key="1">
    <citation type="journal article" date="1994" name="FEMS Microbiol. Lett.">
        <title>The nusG gene of Streptomyces griseus: cloning of the gene and analysis of the A-factor binding properties of the gene product.</title>
        <authorList>
            <person name="Kuberski S."/>
            <person name="Kasberg T."/>
            <person name="Distler J."/>
        </authorList>
    </citation>
    <scope>NUCLEOTIDE SEQUENCE [GENOMIC DNA]</scope>
    <source>
        <strain>N2-3-11</strain>
    </source>
</reference>